<evidence type="ECO:0000256" key="1">
    <source>
        <dbReference type="SAM" id="MobiDB-lite"/>
    </source>
</evidence>
<evidence type="ECO:0000305" key="2"/>
<comment type="similarity">
    <text evidence="2">Belongs to the IS150/IS1296 orfA family.</text>
</comment>
<accession>Q48585</accession>
<reference key="1">
    <citation type="journal article" date="1994" name="J. Bacteriol.">
        <title>Isolation of a novel IS3 group insertion element and construction of an integration vector for Lactobacillus spp.</title>
        <authorList>
            <person name="Walker D.C."/>
            <person name="Klaenhammer T.R."/>
        </authorList>
    </citation>
    <scope>NUCLEOTIDE SEQUENCE [GENOMIC DNA]</scope>
    <source>
        <strain>ATCC 11506 / BCRC 14004 / JCM 1101 / NBRC 13952 / NCIMB 8795 / VPI 11088 / R-26</strain>
    </source>
</reference>
<keyword id="KW-0814">Transposable element</keyword>
<organism>
    <name type="scientific">Lactobacillus johnsonii</name>
    <dbReference type="NCBI Taxonomy" id="33959"/>
    <lineage>
        <taxon>Bacteria</taxon>
        <taxon>Bacillati</taxon>
        <taxon>Bacillota</taxon>
        <taxon>Bacilli</taxon>
        <taxon>Lactobacillales</taxon>
        <taxon>Lactobacillaceae</taxon>
        <taxon>Lactobacillus</taxon>
    </lineage>
</organism>
<dbReference type="EMBL" id="U09558">
    <property type="protein sequence ID" value="AAA56999.1"/>
    <property type="molecule type" value="Genomic_DNA"/>
</dbReference>
<dbReference type="SMR" id="Q48585"/>
<dbReference type="STRING" id="33959.BBP16_07550"/>
<dbReference type="GO" id="GO:0043565">
    <property type="term" value="F:sequence-specific DNA binding"/>
    <property type="evidence" value="ECO:0007669"/>
    <property type="project" value="InterPro"/>
</dbReference>
<dbReference type="GO" id="GO:0004803">
    <property type="term" value="F:transposase activity"/>
    <property type="evidence" value="ECO:0007669"/>
    <property type="project" value="InterPro"/>
</dbReference>
<dbReference type="GO" id="GO:0006313">
    <property type="term" value="P:DNA transposition"/>
    <property type="evidence" value="ECO:0007669"/>
    <property type="project" value="InterPro"/>
</dbReference>
<dbReference type="Gene3D" id="1.10.10.10">
    <property type="entry name" value="Winged helix-like DNA-binding domain superfamily/Winged helix DNA-binding domain"/>
    <property type="match status" value="2"/>
</dbReference>
<dbReference type="InterPro" id="IPR009057">
    <property type="entry name" value="Homeodomain-like_sf"/>
</dbReference>
<dbReference type="InterPro" id="IPR055247">
    <property type="entry name" value="InsJ-like_HTH"/>
</dbReference>
<dbReference type="InterPro" id="IPR052057">
    <property type="entry name" value="IS150/IS1296_orfA-like"/>
</dbReference>
<dbReference type="InterPro" id="IPR002514">
    <property type="entry name" value="Transposase_8"/>
</dbReference>
<dbReference type="InterPro" id="IPR010921">
    <property type="entry name" value="Trp_repressor/repl_initiator"/>
</dbReference>
<dbReference type="InterPro" id="IPR036388">
    <property type="entry name" value="WH-like_DNA-bd_sf"/>
</dbReference>
<dbReference type="PANTHER" id="PTHR33795">
    <property type="entry name" value="INSERTION ELEMENT IS150 PROTEIN INSJ"/>
    <property type="match status" value="1"/>
</dbReference>
<dbReference type="PANTHER" id="PTHR33795:SF1">
    <property type="entry name" value="INSERTION ELEMENT IS150 PROTEIN INSJ"/>
    <property type="match status" value="1"/>
</dbReference>
<dbReference type="Pfam" id="PF13518">
    <property type="entry name" value="HTH_28"/>
    <property type="match status" value="1"/>
</dbReference>
<dbReference type="Pfam" id="PF01527">
    <property type="entry name" value="HTH_Tnp_1"/>
    <property type="match status" value="1"/>
</dbReference>
<dbReference type="SUPFAM" id="SSF46689">
    <property type="entry name" value="Homeodomain-like"/>
    <property type="match status" value="1"/>
</dbReference>
<dbReference type="SUPFAM" id="SSF48295">
    <property type="entry name" value="TrpR-like"/>
    <property type="match status" value="1"/>
</dbReference>
<feature type="chain" id="PRO_0000075496" description="Insertion element IS1223 uncharacterized 20.7 kDa protein">
    <location>
        <begin position="1"/>
        <end position="177"/>
    </location>
</feature>
<feature type="region of interest" description="Disordered" evidence="1">
    <location>
        <begin position="112"/>
        <end position="131"/>
    </location>
</feature>
<feature type="compositionally biased region" description="Basic residues" evidence="1">
    <location>
        <begin position="113"/>
        <end position="128"/>
    </location>
</feature>
<name>YI3A_LACJH</name>
<proteinExistence type="inferred from homology"/>
<sequence length="177" mass="20731">MTKYSTELKIEIVSKYLNHEDSIKGLAKQYNIHWTLIRRWVDKAKCQGLAALSVKHTKTTYSSDFKLNVVRYYLTHSIGVSKVAAKFNISDSQVYNWAKKFNEEGYAGLLPKQKGRPRKVPKKSKKTTKKLELSEKQKYEEKILKQEAELERLRVENLVLKKVAARYPRYPTNKKHN</sequence>
<protein>
    <recommendedName>
        <fullName>Insertion element IS1223 uncharacterized 20.7 kDa protein</fullName>
    </recommendedName>
    <alternativeName>
        <fullName>ORFA</fullName>
    </alternativeName>
</protein>